<name>QUEA_BURA4</name>
<organism>
    <name type="scientific">Burkholderia ambifaria (strain MC40-6)</name>
    <dbReference type="NCBI Taxonomy" id="398577"/>
    <lineage>
        <taxon>Bacteria</taxon>
        <taxon>Pseudomonadati</taxon>
        <taxon>Pseudomonadota</taxon>
        <taxon>Betaproteobacteria</taxon>
        <taxon>Burkholderiales</taxon>
        <taxon>Burkholderiaceae</taxon>
        <taxon>Burkholderia</taxon>
        <taxon>Burkholderia cepacia complex</taxon>
    </lineage>
</organism>
<keyword id="KW-0963">Cytoplasm</keyword>
<keyword id="KW-0671">Queuosine biosynthesis</keyword>
<keyword id="KW-0949">S-adenosyl-L-methionine</keyword>
<keyword id="KW-0808">Transferase</keyword>
<proteinExistence type="inferred from homology"/>
<sequence>MFTLSDFDFNLPPELIAQTALPERTASRLLEVDHTVEPARLVDRNFVELPSCIAPGDLLVFNDTRVLKARFFGQKASGGKIEVLIERVTGTHTALAQIRASKSPGAGTTLRLADAFDVTVGERVEPFFTLHFPQPCLTLIEQHGRLPLPPYIEHDADASDETRYQTVYASNPGAVAAPTAGLHFDLPLLERLDAMGVERATLTLHVGAGTFQPVRVENIAEHRMHSEWYDLPQSLVDKIAATRARGGNVIAVGTTSMRALEAAARSADEAGRPLAATQAETDIFITPGYRFRVVDRLVTNFHLPKSTLLMLVSAFAGVETIRAAYRHAIDQRYRFFSYGDAMLLTRRDTPEAPRA</sequence>
<evidence type="ECO:0000255" key="1">
    <source>
        <dbReference type="HAMAP-Rule" id="MF_00113"/>
    </source>
</evidence>
<accession>B1YTH0</accession>
<comment type="function">
    <text evidence="1">Transfers and isomerizes the ribose moiety from AdoMet to the 7-aminomethyl group of 7-deazaguanine (preQ1-tRNA) to give epoxyqueuosine (oQ-tRNA).</text>
</comment>
<comment type="catalytic activity">
    <reaction evidence="1">
        <text>7-aminomethyl-7-carbaguanosine(34) in tRNA + S-adenosyl-L-methionine = epoxyqueuosine(34) in tRNA + adenine + L-methionine + 2 H(+)</text>
        <dbReference type="Rhea" id="RHEA:32155"/>
        <dbReference type="Rhea" id="RHEA-COMP:10342"/>
        <dbReference type="Rhea" id="RHEA-COMP:18582"/>
        <dbReference type="ChEBI" id="CHEBI:15378"/>
        <dbReference type="ChEBI" id="CHEBI:16708"/>
        <dbReference type="ChEBI" id="CHEBI:57844"/>
        <dbReference type="ChEBI" id="CHEBI:59789"/>
        <dbReference type="ChEBI" id="CHEBI:82833"/>
        <dbReference type="ChEBI" id="CHEBI:194443"/>
        <dbReference type="EC" id="2.4.99.17"/>
    </reaction>
</comment>
<comment type="pathway">
    <text evidence="1">tRNA modification; tRNA-queuosine biosynthesis.</text>
</comment>
<comment type="subunit">
    <text evidence="1">Monomer.</text>
</comment>
<comment type="subcellular location">
    <subcellularLocation>
        <location evidence="1">Cytoplasm</location>
    </subcellularLocation>
</comment>
<comment type="similarity">
    <text evidence="1">Belongs to the QueA family.</text>
</comment>
<feature type="chain" id="PRO_1000094754" description="S-adenosylmethionine:tRNA ribosyltransferase-isomerase">
    <location>
        <begin position="1"/>
        <end position="355"/>
    </location>
</feature>
<gene>
    <name evidence="1" type="primary">queA</name>
    <name type="ordered locus">BamMC406_0638</name>
</gene>
<protein>
    <recommendedName>
        <fullName evidence="1">S-adenosylmethionine:tRNA ribosyltransferase-isomerase</fullName>
        <ecNumber evidence="1">2.4.99.17</ecNumber>
    </recommendedName>
    <alternativeName>
        <fullName evidence="1">Queuosine biosynthesis protein QueA</fullName>
    </alternativeName>
</protein>
<reference key="1">
    <citation type="submission" date="2008-04" db="EMBL/GenBank/DDBJ databases">
        <title>Complete sequence of chromosome 1 of Burkholderia ambifaria MC40-6.</title>
        <authorList>
            <person name="Copeland A."/>
            <person name="Lucas S."/>
            <person name="Lapidus A."/>
            <person name="Glavina del Rio T."/>
            <person name="Dalin E."/>
            <person name="Tice H."/>
            <person name="Pitluck S."/>
            <person name="Chain P."/>
            <person name="Malfatti S."/>
            <person name="Shin M."/>
            <person name="Vergez L."/>
            <person name="Lang D."/>
            <person name="Schmutz J."/>
            <person name="Larimer F."/>
            <person name="Land M."/>
            <person name="Hauser L."/>
            <person name="Kyrpides N."/>
            <person name="Lykidis A."/>
            <person name="Ramette A."/>
            <person name="Konstantinidis K."/>
            <person name="Tiedje J."/>
            <person name="Richardson P."/>
        </authorList>
    </citation>
    <scope>NUCLEOTIDE SEQUENCE [LARGE SCALE GENOMIC DNA]</scope>
    <source>
        <strain>MC40-6</strain>
    </source>
</reference>
<dbReference type="EC" id="2.4.99.17" evidence="1"/>
<dbReference type="EMBL" id="CP001025">
    <property type="protein sequence ID" value="ACB63135.1"/>
    <property type="molecule type" value="Genomic_DNA"/>
</dbReference>
<dbReference type="RefSeq" id="WP_012363130.1">
    <property type="nucleotide sequence ID" value="NC_010551.1"/>
</dbReference>
<dbReference type="SMR" id="B1YTH0"/>
<dbReference type="KEGG" id="bac:BamMC406_0638"/>
<dbReference type="HOGENOM" id="CLU_039110_1_0_4"/>
<dbReference type="OrthoDB" id="9805933at2"/>
<dbReference type="UniPathway" id="UPA00392"/>
<dbReference type="Proteomes" id="UP000001680">
    <property type="component" value="Chromosome 1"/>
</dbReference>
<dbReference type="GO" id="GO:0005737">
    <property type="term" value="C:cytoplasm"/>
    <property type="evidence" value="ECO:0007669"/>
    <property type="project" value="UniProtKB-SubCell"/>
</dbReference>
<dbReference type="GO" id="GO:0051075">
    <property type="term" value="F:S-adenosylmethionine:tRNA ribosyltransferase-isomerase activity"/>
    <property type="evidence" value="ECO:0007669"/>
    <property type="project" value="UniProtKB-EC"/>
</dbReference>
<dbReference type="GO" id="GO:0008616">
    <property type="term" value="P:queuosine biosynthetic process"/>
    <property type="evidence" value="ECO:0007669"/>
    <property type="project" value="UniProtKB-UniRule"/>
</dbReference>
<dbReference type="GO" id="GO:0002099">
    <property type="term" value="P:tRNA wobble guanine modification"/>
    <property type="evidence" value="ECO:0007669"/>
    <property type="project" value="TreeGrafter"/>
</dbReference>
<dbReference type="FunFam" id="3.40.1780.10:FF:000001">
    <property type="entry name" value="S-adenosylmethionine:tRNA ribosyltransferase-isomerase"/>
    <property type="match status" value="1"/>
</dbReference>
<dbReference type="Gene3D" id="2.40.10.240">
    <property type="entry name" value="QueA-like"/>
    <property type="match status" value="1"/>
</dbReference>
<dbReference type="Gene3D" id="3.40.1780.10">
    <property type="entry name" value="QueA-like"/>
    <property type="match status" value="1"/>
</dbReference>
<dbReference type="HAMAP" id="MF_00113">
    <property type="entry name" value="QueA"/>
    <property type="match status" value="1"/>
</dbReference>
<dbReference type="InterPro" id="IPR003699">
    <property type="entry name" value="QueA"/>
</dbReference>
<dbReference type="InterPro" id="IPR042118">
    <property type="entry name" value="QueA_dom1"/>
</dbReference>
<dbReference type="InterPro" id="IPR042119">
    <property type="entry name" value="QueA_dom2"/>
</dbReference>
<dbReference type="InterPro" id="IPR036100">
    <property type="entry name" value="QueA_sf"/>
</dbReference>
<dbReference type="NCBIfam" id="NF001140">
    <property type="entry name" value="PRK00147.1"/>
    <property type="match status" value="1"/>
</dbReference>
<dbReference type="NCBIfam" id="TIGR00113">
    <property type="entry name" value="queA"/>
    <property type="match status" value="1"/>
</dbReference>
<dbReference type="PANTHER" id="PTHR30307">
    <property type="entry name" value="S-ADENOSYLMETHIONINE:TRNA RIBOSYLTRANSFERASE-ISOMERASE"/>
    <property type="match status" value="1"/>
</dbReference>
<dbReference type="PANTHER" id="PTHR30307:SF0">
    <property type="entry name" value="S-ADENOSYLMETHIONINE:TRNA RIBOSYLTRANSFERASE-ISOMERASE"/>
    <property type="match status" value="1"/>
</dbReference>
<dbReference type="Pfam" id="PF02547">
    <property type="entry name" value="Queuosine_synth"/>
    <property type="match status" value="1"/>
</dbReference>
<dbReference type="SUPFAM" id="SSF111337">
    <property type="entry name" value="QueA-like"/>
    <property type="match status" value="1"/>
</dbReference>